<organism>
    <name type="scientific">Yersinia pseudotuberculosis serotype I (strain IP32953)</name>
    <dbReference type="NCBI Taxonomy" id="273123"/>
    <lineage>
        <taxon>Bacteria</taxon>
        <taxon>Pseudomonadati</taxon>
        <taxon>Pseudomonadota</taxon>
        <taxon>Gammaproteobacteria</taxon>
        <taxon>Enterobacterales</taxon>
        <taxon>Yersiniaceae</taxon>
        <taxon>Yersinia</taxon>
    </lineage>
</organism>
<gene>
    <name evidence="1" type="primary">tmk</name>
    <name type="ordered locus">YPTB2466</name>
</gene>
<protein>
    <recommendedName>
        <fullName evidence="1">Thymidylate kinase</fullName>
        <ecNumber evidence="1">2.7.4.9</ecNumber>
    </recommendedName>
    <alternativeName>
        <fullName evidence="1">dTMP kinase</fullName>
    </alternativeName>
</protein>
<accession>Q669L8</accession>
<proteinExistence type="inferred from homology"/>
<comment type="function">
    <text evidence="1">Phosphorylation of dTMP to form dTDP in both de novo and salvage pathways of dTTP synthesis.</text>
</comment>
<comment type="catalytic activity">
    <reaction evidence="1">
        <text>dTMP + ATP = dTDP + ADP</text>
        <dbReference type="Rhea" id="RHEA:13517"/>
        <dbReference type="ChEBI" id="CHEBI:30616"/>
        <dbReference type="ChEBI" id="CHEBI:58369"/>
        <dbReference type="ChEBI" id="CHEBI:63528"/>
        <dbReference type="ChEBI" id="CHEBI:456216"/>
        <dbReference type="EC" id="2.7.4.9"/>
    </reaction>
</comment>
<comment type="similarity">
    <text evidence="1">Belongs to the thymidylate kinase family.</text>
</comment>
<reference key="1">
    <citation type="journal article" date="2004" name="Proc. Natl. Acad. Sci. U.S.A.">
        <title>Insights into the evolution of Yersinia pestis through whole-genome comparison with Yersinia pseudotuberculosis.</title>
        <authorList>
            <person name="Chain P.S.G."/>
            <person name="Carniel E."/>
            <person name="Larimer F.W."/>
            <person name="Lamerdin J."/>
            <person name="Stoutland P.O."/>
            <person name="Regala W.M."/>
            <person name="Georgescu A.M."/>
            <person name="Vergez L.M."/>
            <person name="Land M.L."/>
            <person name="Motin V.L."/>
            <person name="Brubaker R.R."/>
            <person name="Fowler J."/>
            <person name="Hinnebusch J."/>
            <person name="Marceau M."/>
            <person name="Medigue C."/>
            <person name="Simonet M."/>
            <person name="Chenal-Francisque V."/>
            <person name="Souza B."/>
            <person name="Dacheux D."/>
            <person name="Elliott J.M."/>
            <person name="Derbise A."/>
            <person name="Hauser L.J."/>
            <person name="Garcia E."/>
        </authorList>
    </citation>
    <scope>NUCLEOTIDE SEQUENCE [LARGE SCALE GENOMIC DNA]</scope>
    <source>
        <strain>IP32953</strain>
    </source>
</reference>
<name>KTHY_YERPS</name>
<sequence>MNSKFIVIEGLEGAGKTTARDTVVAVLRAQGINDIVFTREPGGTPLAEKLRDLIKQGIDGEVLTDKAEVLMLYAARVQLVENVIKPALARGSWVVGDRHDLSSQAYQGGGRGIDSQLMASLRDTVLGEFRPDLTLYLDLPPAVGLARARARGELDRIEQESLAFFERTRARYLELAASDASIKTIDASQPIEQVSASISQALAQWLTNQELV</sequence>
<dbReference type="EC" id="2.7.4.9" evidence="1"/>
<dbReference type="EMBL" id="BX936398">
    <property type="protein sequence ID" value="CAH21704.1"/>
    <property type="molecule type" value="Genomic_DNA"/>
</dbReference>
<dbReference type="RefSeq" id="WP_011192604.1">
    <property type="nucleotide sequence ID" value="NC_006155.1"/>
</dbReference>
<dbReference type="SMR" id="Q669L8"/>
<dbReference type="KEGG" id="ypo:BZ17_4170"/>
<dbReference type="KEGG" id="yps:YPTB2466"/>
<dbReference type="PATRIC" id="fig|273123.14.peg.4393"/>
<dbReference type="Proteomes" id="UP000001011">
    <property type="component" value="Chromosome"/>
</dbReference>
<dbReference type="GO" id="GO:0005829">
    <property type="term" value="C:cytosol"/>
    <property type="evidence" value="ECO:0007669"/>
    <property type="project" value="TreeGrafter"/>
</dbReference>
<dbReference type="GO" id="GO:0005524">
    <property type="term" value="F:ATP binding"/>
    <property type="evidence" value="ECO:0007669"/>
    <property type="project" value="UniProtKB-UniRule"/>
</dbReference>
<dbReference type="GO" id="GO:0004798">
    <property type="term" value="F:dTMP kinase activity"/>
    <property type="evidence" value="ECO:0007669"/>
    <property type="project" value="UniProtKB-UniRule"/>
</dbReference>
<dbReference type="GO" id="GO:0006233">
    <property type="term" value="P:dTDP biosynthetic process"/>
    <property type="evidence" value="ECO:0007669"/>
    <property type="project" value="InterPro"/>
</dbReference>
<dbReference type="GO" id="GO:0006235">
    <property type="term" value="P:dTTP biosynthetic process"/>
    <property type="evidence" value="ECO:0007669"/>
    <property type="project" value="UniProtKB-UniRule"/>
</dbReference>
<dbReference type="GO" id="GO:0006227">
    <property type="term" value="P:dUDP biosynthetic process"/>
    <property type="evidence" value="ECO:0007669"/>
    <property type="project" value="TreeGrafter"/>
</dbReference>
<dbReference type="CDD" id="cd01672">
    <property type="entry name" value="TMPK"/>
    <property type="match status" value="1"/>
</dbReference>
<dbReference type="FunFam" id="3.40.50.300:FF:000321">
    <property type="entry name" value="Thymidylate kinase"/>
    <property type="match status" value="1"/>
</dbReference>
<dbReference type="Gene3D" id="3.40.50.300">
    <property type="entry name" value="P-loop containing nucleotide triphosphate hydrolases"/>
    <property type="match status" value="1"/>
</dbReference>
<dbReference type="HAMAP" id="MF_00165">
    <property type="entry name" value="Thymidylate_kinase"/>
    <property type="match status" value="1"/>
</dbReference>
<dbReference type="InterPro" id="IPR027417">
    <property type="entry name" value="P-loop_NTPase"/>
</dbReference>
<dbReference type="InterPro" id="IPR039430">
    <property type="entry name" value="Thymidylate_kin-like_dom"/>
</dbReference>
<dbReference type="InterPro" id="IPR018095">
    <property type="entry name" value="Thymidylate_kin_CS"/>
</dbReference>
<dbReference type="InterPro" id="IPR018094">
    <property type="entry name" value="Thymidylate_kinase"/>
</dbReference>
<dbReference type="NCBIfam" id="TIGR00041">
    <property type="entry name" value="DTMP_kinase"/>
    <property type="match status" value="1"/>
</dbReference>
<dbReference type="PANTHER" id="PTHR10344">
    <property type="entry name" value="THYMIDYLATE KINASE"/>
    <property type="match status" value="1"/>
</dbReference>
<dbReference type="PANTHER" id="PTHR10344:SF4">
    <property type="entry name" value="UMP-CMP KINASE 2, MITOCHONDRIAL"/>
    <property type="match status" value="1"/>
</dbReference>
<dbReference type="Pfam" id="PF02223">
    <property type="entry name" value="Thymidylate_kin"/>
    <property type="match status" value="1"/>
</dbReference>
<dbReference type="SUPFAM" id="SSF52540">
    <property type="entry name" value="P-loop containing nucleoside triphosphate hydrolases"/>
    <property type="match status" value="1"/>
</dbReference>
<dbReference type="PROSITE" id="PS01331">
    <property type="entry name" value="THYMIDYLATE_KINASE"/>
    <property type="match status" value="1"/>
</dbReference>
<feature type="chain" id="PRO_0000155380" description="Thymidylate kinase">
    <location>
        <begin position="1"/>
        <end position="212"/>
    </location>
</feature>
<feature type="binding site" evidence="1">
    <location>
        <begin position="10"/>
        <end position="17"/>
    </location>
    <ligand>
        <name>ATP</name>
        <dbReference type="ChEBI" id="CHEBI:30616"/>
    </ligand>
</feature>
<evidence type="ECO:0000255" key="1">
    <source>
        <dbReference type="HAMAP-Rule" id="MF_00165"/>
    </source>
</evidence>
<keyword id="KW-0067">ATP-binding</keyword>
<keyword id="KW-0418">Kinase</keyword>
<keyword id="KW-0545">Nucleotide biosynthesis</keyword>
<keyword id="KW-0547">Nucleotide-binding</keyword>
<keyword id="KW-0808">Transferase</keyword>